<gene>
    <name evidence="1" type="primary">csrA</name>
    <name type="ordered locus">SNSL254_A3028</name>
</gene>
<name>CSRA_SALNS</name>
<reference key="1">
    <citation type="journal article" date="2011" name="J. Bacteriol.">
        <title>Comparative genomics of 28 Salmonella enterica isolates: evidence for CRISPR-mediated adaptive sublineage evolution.</title>
        <authorList>
            <person name="Fricke W.F."/>
            <person name="Mammel M.K."/>
            <person name="McDermott P.F."/>
            <person name="Tartera C."/>
            <person name="White D.G."/>
            <person name="Leclerc J.E."/>
            <person name="Ravel J."/>
            <person name="Cebula T.A."/>
        </authorList>
    </citation>
    <scope>NUCLEOTIDE SEQUENCE [LARGE SCALE GENOMIC DNA]</scope>
    <source>
        <strain>SL254</strain>
    </source>
</reference>
<organism>
    <name type="scientific">Salmonella newport (strain SL254)</name>
    <dbReference type="NCBI Taxonomy" id="423368"/>
    <lineage>
        <taxon>Bacteria</taxon>
        <taxon>Pseudomonadati</taxon>
        <taxon>Pseudomonadota</taxon>
        <taxon>Gammaproteobacteria</taxon>
        <taxon>Enterobacterales</taxon>
        <taxon>Enterobacteriaceae</taxon>
        <taxon>Salmonella</taxon>
    </lineage>
</organism>
<evidence type="ECO:0000255" key="1">
    <source>
        <dbReference type="HAMAP-Rule" id="MF_00167"/>
    </source>
</evidence>
<protein>
    <recommendedName>
        <fullName evidence="1">Translational regulator CsrA</fullName>
    </recommendedName>
    <alternativeName>
        <fullName evidence="1">Carbon storage regulator</fullName>
    </alternativeName>
</protein>
<dbReference type="EMBL" id="CP001113">
    <property type="protein sequence ID" value="ACF62786.1"/>
    <property type="molecule type" value="Genomic_DNA"/>
</dbReference>
<dbReference type="RefSeq" id="WP_000906486.1">
    <property type="nucleotide sequence ID" value="NZ_CCMR01000001.1"/>
</dbReference>
<dbReference type="SMR" id="B4T397"/>
<dbReference type="GeneID" id="98389839"/>
<dbReference type="KEGG" id="see:SNSL254_A3028"/>
<dbReference type="HOGENOM" id="CLU_164837_2_1_6"/>
<dbReference type="Proteomes" id="UP000008824">
    <property type="component" value="Chromosome"/>
</dbReference>
<dbReference type="GO" id="GO:0005829">
    <property type="term" value="C:cytosol"/>
    <property type="evidence" value="ECO:0007669"/>
    <property type="project" value="TreeGrafter"/>
</dbReference>
<dbReference type="GO" id="GO:0048027">
    <property type="term" value="F:mRNA 5'-UTR binding"/>
    <property type="evidence" value="ECO:0007669"/>
    <property type="project" value="UniProtKB-UniRule"/>
</dbReference>
<dbReference type="GO" id="GO:0006402">
    <property type="term" value="P:mRNA catabolic process"/>
    <property type="evidence" value="ECO:0007669"/>
    <property type="project" value="InterPro"/>
</dbReference>
<dbReference type="GO" id="GO:0045947">
    <property type="term" value="P:negative regulation of translational initiation"/>
    <property type="evidence" value="ECO:0007669"/>
    <property type="project" value="UniProtKB-UniRule"/>
</dbReference>
<dbReference type="GO" id="GO:0045948">
    <property type="term" value="P:positive regulation of translational initiation"/>
    <property type="evidence" value="ECO:0007669"/>
    <property type="project" value="UniProtKB-UniRule"/>
</dbReference>
<dbReference type="GO" id="GO:0006109">
    <property type="term" value="P:regulation of carbohydrate metabolic process"/>
    <property type="evidence" value="ECO:0007669"/>
    <property type="project" value="UniProtKB-UniRule"/>
</dbReference>
<dbReference type="FunFam" id="2.60.40.4380:FF:000001">
    <property type="entry name" value="Translational regulator CsrA"/>
    <property type="match status" value="1"/>
</dbReference>
<dbReference type="Gene3D" id="2.60.40.4380">
    <property type="entry name" value="Translational regulator CsrA"/>
    <property type="match status" value="1"/>
</dbReference>
<dbReference type="HAMAP" id="MF_00167">
    <property type="entry name" value="CsrA"/>
    <property type="match status" value="1"/>
</dbReference>
<dbReference type="InterPro" id="IPR003751">
    <property type="entry name" value="CsrA"/>
</dbReference>
<dbReference type="InterPro" id="IPR036107">
    <property type="entry name" value="CsrA_sf"/>
</dbReference>
<dbReference type="NCBIfam" id="TIGR00202">
    <property type="entry name" value="csrA"/>
    <property type="match status" value="1"/>
</dbReference>
<dbReference type="NCBIfam" id="NF002469">
    <property type="entry name" value="PRK01712.1"/>
    <property type="match status" value="1"/>
</dbReference>
<dbReference type="PANTHER" id="PTHR34984">
    <property type="entry name" value="CARBON STORAGE REGULATOR"/>
    <property type="match status" value="1"/>
</dbReference>
<dbReference type="PANTHER" id="PTHR34984:SF1">
    <property type="entry name" value="CARBON STORAGE REGULATOR"/>
    <property type="match status" value="1"/>
</dbReference>
<dbReference type="Pfam" id="PF02599">
    <property type="entry name" value="CsrA"/>
    <property type="match status" value="1"/>
</dbReference>
<dbReference type="SUPFAM" id="SSF117130">
    <property type="entry name" value="CsrA-like"/>
    <property type="match status" value="1"/>
</dbReference>
<accession>B4T397</accession>
<proteinExistence type="inferred from homology"/>
<comment type="function">
    <text evidence="1">A key translational regulator that binds mRNA to regulate translation initiation and/or mRNA stability. Mediates global changes in gene expression, shifting from rapid growth to stress survival by linking envelope stress, the stringent response and the catabolite repression systems. Usually binds in the 5'-UTR; binding at or near the Shine-Dalgarno sequence prevents ribosome-binding, repressing translation, binding elsewhere in the 5'-UTR can activate translation and/or stabilize the mRNA. Its function is antagonized by small RNA(s).</text>
</comment>
<comment type="subunit">
    <text evidence="1">Homodimer; the beta-strands of each monomer intercalate to form a hydrophobic core, while the alpha-helices form wings that extend away from the core.</text>
</comment>
<comment type="subcellular location">
    <subcellularLocation>
        <location evidence="1">Cytoplasm</location>
    </subcellularLocation>
</comment>
<comment type="similarity">
    <text evidence="1">Belongs to the CsrA/RsmA family.</text>
</comment>
<feature type="chain" id="PRO_1000097506" description="Translational regulator CsrA">
    <location>
        <begin position="1"/>
        <end position="61"/>
    </location>
</feature>
<keyword id="KW-0010">Activator</keyword>
<keyword id="KW-0963">Cytoplasm</keyword>
<keyword id="KW-0678">Repressor</keyword>
<keyword id="KW-0694">RNA-binding</keyword>
<keyword id="KW-0810">Translation regulation</keyword>
<sequence>MLILTRRVGETLMIGDEVTVTVLGVKGNQVRIGVNAPKEVSVHREEIYQRIQAEKSQQSSY</sequence>